<evidence type="ECO:0000255" key="1">
    <source>
        <dbReference type="HAMAP-Rule" id="MF_00005"/>
    </source>
</evidence>
<comment type="catalytic activity">
    <reaction evidence="1">
        <text>L-citrulline + L-aspartate + ATP = 2-(N(omega)-L-arginino)succinate + AMP + diphosphate + H(+)</text>
        <dbReference type="Rhea" id="RHEA:10932"/>
        <dbReference type="ChEBI" id="CHEBI:15378"/>
        <dbReference type="ChEBI" id="CHEBI:29991"/>
        <dbReference type="ChEBI" id="CHEBI:30616"/>
        <dbReference type="ChEBI" id="CHEBI:33019"/>
        <dbReference type="ChEBI" id="CHEBI:57472"/>
        <dbReference type="ChEBI" id="CHEBI:57743"/>
        <dbReference type="ChEBI" id="CHEBI:456215"/>
        <dbReference type="EC" id="6.3.4.5"/>
    </reaction>
</comment>
<comment type="pathway">
    <text evidence="1">Amino-acid biosynthesis; L-arginine biosynthesis; L-arginine from L-ornithine and carbamoyl phosphate: step 2/3.</text>
</comment>
<comment type="subunit">
    <text evidence="1">Homotetramer.</text>
</comment>
<comment type="subcellular location">
    <subcellularLocation>
        <location evidence="1">Cytoplasm</location>
    </subcellularLocation>
</comment>
<comment type="similarity">
    <text evidence="1">Belongs to the argininosuccinate synthase family. Type 1 subfamily.</text>
</comment>
<sequence>MGKEIKKVVLAYSGGLDTSVILKWIAKTYDCEVVTLTADLGQEEDLDGVDEKALRTGATRAYVEDLREEFARDFIFPMMRACAIYEGRYLLGTSIARPLITRRLVEIAHAEGAQAVAHGATGKGNDQVRFELASAALDPSLKVIAPWREWDFRSRTDLLNFAAENDIPVISAGNRKLYSMDRNMLHCSFEGGELEDPWNEPGPGSYIMAVPVEQAPDEPEYITIDFEKGNAVAINGQAMSPAAIIKTLNTLGGKHGVGRLDMVENRFVGMKSRGVYETPGGTVLHAAHRDLEGICLDREALHLRDSLIPRYAAAVYNGFWYSPEREALQALVDKTQENVTGTVRVKLYKGNVVPVGRKSPYSLYRMDLATFEEDEVYNQADAAGFIRLNSLRIQGYGRRS</sequence>
<organism>
    <name type="scientific">Oleidesulfovibrio alaskensis (strain ATCC BAA-1058 / DSM 17464 / G20)</name>
    <name type="common">Desulfovibrio alaskensis</name>
    <dbReference type="NCBI Taxonomy" id="207559"/>
    <lineage>
        <taxon>Bacteria</taxon>
        <taxon>Pseudomonadati</taxon>
        <taxon>Thermodesulfobacteriota</taxon>
        <taxon>Desulfovibrionia</taxon>
        <taxon>Desulfovibrionales</taxon>
        <taxon>Desulfovibrionaceae</taxon>
        <taxon>Oleidesulfovibrio</taxon>
    </lineage>
</organism>
<accession>Q30YB8</accession>
<dbReference type="EC" id="6.3.4.5" evidence="1"/>
<dbReference type="EMBL" id="CP000112">
    <property type="protein sequence ID" value="ABB39328.1"/>
    <property type="molecule type" value="Genomic_DNA"/>
</dbReference>
<dbReference type="RefSeq" id="WP_011368380.1">
    <property type="nucleotide sequence ID" value="NC_007519.1"/>
</dbReference>
<dbReference type="SMR" id="Q30YB8"/>
<dbReference type="STRING" id="207559.Dde_2531"/>
<dbReference type="KEGG" id="dde:Dde_2531"/>
<dbReference type="eggNOG" id="COG0137">
    <property type="taxonomic scope" value="Bacteria"/>
</dbReference>
<dbReference type="HOGENOM" id="CLU_032784_4_2_7"/>
<dbReference type="UniPathway" id="UPA00068">
    <property type="reaction ID" value="UER00113"/>
</dbReference>
<dbReference type="Proteomes" id="UP000002710">
    <property type="component" value="Chromosome"/>
</dbReference>
<dbReference type="GO" id="GO:0005737">
    <property type="term" value="C:cytoplasm"/>
    <property type="evidence" value="ECO:0007669"/>
    <property type="project" value="UniProtKB-SubCell"/>
</dbReference>
<dbReference type="GO" id="GO:0004055">
    <property type="term" value="F:argininosuccinate synthase activity"/>
    <property type="evidence" value="ECO:0007669"/>
    <property type="project" value="UniProtKB-UniRule"/>
</dbReference>
<dbReference type="GO" id="GO:0005524">
    <property type="term" value="F:ATP binding"/>
    <property type="evidence" value="ECO:0007669"/>
    <property type="project" value="UniProtKB-UniRule"/>
</dbReference>
<dbReference type="GO" id="GO:0000053">
    <property type="term" value="P:argininosuccinate metabolic process"/>
    <property type="evidence" value="ECO:0007669"/>
    <property type="project" value="TreeGrafter"/>
</dbReference>
<dbReference type="GO" id="GO:0006526">
    <property type="term" value="P:L-arginine biosynthetic process"/>
    <property type="evidence" value="ECO:0007669"/>
    <property type="project" value="UniProtKB-UniRule"/>
</dbReference>
<dbReference type="GO" id="GO:0000050">
    <property type="term" value="P:urea cycle"/>
    <property type="evidence" value="ECO:0007669"/>
    <property type="project" value="TreeGrafter"/>
</dbReference>
<dbReference type="CDD" id="cd01999">
    <property type="entry name" value="ASS"/>
    <property type="match status" value="1"/>
</dbReference>
<dbReference type="FunFam" id="3.40.50.620:FF:000019">
    <property type="entry name" value="Argininosuccinate synthase"/>
    <property type="match status" value="1"/>
</dbReference>
<dbReference type="FunFam" id="3.90.1260.10:FF:000007">
    <property type="entry name" value="Argininosuccinate synthase"/>
    <property type="match status" value="1"/>
</dbReference>
<dbReference type="Gene3D" id="3.90.1260.10">
    <property type="entry name" value="Argininosuccinate synthetase, chain A, domain 2"/>
    <property type="match status" value="1"/>
</dbReference>
<dbReference type="Gene3D" id="3.40.50.620">
    <property type="entry name" value="HUPs"/>
    <property type="match status" value="1"/>
</dbReference>
<dbReference type="HAMAP" id="MF_00005">
    <property type="entry name" value="Arg_succ_synth_type1"/>
    <property type="match status" value="1"/>
</dbReference>
<dbReference type="InterPro" id="IPR048268">
    <property type="entry name" value="Arginosuc_syn_C"/>
</dbReference>
<dbReference type="InterPro" id="IPR048267">
    <property type="entry name" value="Arginosuc_syn_N"/>
</dbReference>
<dbReference type="InterPro" id="IPR001518">
    <property type="entry name" value="Arginosuc_synth"/>
</dbReference>
<dbReference type="InterPro" id="IPR018223">
    <property type="entry name" value="Arginosuc_synth_CS"/>
</dbReference>
<dbReference type="InterPro" id="IPR023434">
    <property type="entry name" value="Arginosuc_synth_type_1_subfam"/>
</dbReference>
<dbReference type="InterPro" id="IPR024074">
    <property type="entry name" value="AS_cat/multimer_dom_body"/>
</dbReference>
<dbReference type="InterPro" id="IPR014729">
    <property type="entry name" value="Rossmann-like_a/b/a_fold"/>
</dbReference>
<dbReference type="NCBIfam" id="TIGR00032">
    <property type="entry name" value="argG"/>
    <property type="match status" value="1"/>
</dbReference>
<dbReference type="NCBIfam" id="NF001770">
    <property type="entry name" value="PRK00509.1"/>
    <property type="match status" value="1"/>
</dbReference>
<dbReference type="PANTHER" id="PTHR11587">
    <property type="entry name" value="ARGININOSUCCINATE SYNTHASE"/>
    <property type="match status" value="1"/>
</dbReference>
<dbReference type="PANTHER" id="PTHR11587:SF2">
    <property type="entry name" value="ARGININOSUCCINATE SYNTHASE"/>
    <property type="match status" value="1"/>
</dbReference>
<dbReference type="Pfam" id="PF20979">
    <property type="entry name" value="Arginosuc_syn_C"/>
    <property type="match status" value="1"/>
</dbReference>
<dbReference type="Pfam" id="PF00764">
    <property type="entry name" value="Arginosuc_synth"/>
    <property type="match status" value="1"/>
</dbReference>
<dbReference type="SUPFAM" id="SSF52402">
    <property type="entry name" value="Adenine nucleotide alpha hydrolases-like"/>
    <property type="match status" value="1"/>
</dbReference>
<dbReference type="SUPFAM" id="SSF69864">
    <property type="entry name" value="Argininosuccinate synthetase, C-terminal domain"/>
    <property type="match status" value="1"/>
</dbReference>
<dbReference type="PROSITE" id="PS00564">
    <property type="entry name" value="ARGININOSUCCIN_SYN_1"/>
    <property type="match status" value="1"/>
</dbReference>
<dbReference type="PROSITE" id="PS00565">
    <property type="entry name" value="ARGININOSUCCIN_SYN_2"/>
    <property type="match status" value="1"/>
</dbReference>
<feature type="chain" id="PRO_0000263922" description="Argininosuccinate synthase">
    <location>
        <begin position="1"/>
        <end position="400"/>
    </location>
</feature>
<feature type="binding site" evidence="1">
    <location>
        <begin position="11"/>
        <end position="19"/>
    </location>
    <ligand>
        <name>ATP</name>
        <dbReference type="ChEBI" id="CHEBI:30616"/>
    </ligand>
</feature>
<feature type="binding site" evidence="1">
    <location>
        <position position="38"/>
    </location>
    <ligand>
        <name>ATP</name>
        <dbReference type="ChEBI" id="CHEBI:30616"/>
    </ligand>
</feature>
<feature type="binding site" evidence="1">
    <location>
        <position position="89"/>
    </location>
    <ligand>
        <name>L-citrulline</name>
        <dbReference type="ChEBI" id="CHEBI:57743"/>
    </ligand>
</feature>
<feature type="binding site" evidence="1">
    <location>
        <position position="94"/>
    </location>
    <ligand>
        <name>L-citrulline</name>
        <dbReference type="ChEBI" id="CHEBI:57743"/>
    </ligand>
</feature>
<feature type="binding site" evidence="1">
    <location>
        <position position="119"/>
    </location>
    <ligand>
        <name>ATP</name>
        <dbReference type="ChEBI" id="CHEBI:30616"/>
    </ligand>
</feature>
<feature type="binding site" evidence="1">
    <location>
        <position position="121"/>
    </location>
    <ligand>
        <name>L-aspartate</name>
        <dbReference type="ChEBI" id="CHEBI:29991"/>
    </ligand>
</feature>
<feature type="binding site" evidence="1">
    <location>
        <position position="125"/>
    </location>
    <ligand>
        <name>L-aspartate</name>
        <dbReference type="ChEBI" id="CHEBI:29991"/>
    </ligand>
</feature>
<feature type="binding site" evidence="1">
    <location>
        <position position="125"/>
    </location>
    <ligand>
        <name>L-citrulline</name>
        <dbReference type="ChEBI" id="CHEBI:57743"/>
    </ligand>
</feature>
<feature type="binding site" evidence="1">
    <location>
        <position position="126"/>
    </location>
    <ligand>
        <name>L-aspartate</name>
        <dbReference type="ChEBI" id="CHEBI:29991"/>
    </ligand>
</feature>
<feature type="binding site" evidence="1">
    <location>
        <position position="129"/>
    </location>
    <ligand>
        <name>L-citrulline</name>
        <dbReference type="ChEBI" id="CHEBI:57743"/>
    </ligand>
</feature>
<feature type="binding site" evidence="1">
    <location>
        <position position="179"/>
    </location>
    <ligand>
        <name>L-citrulline</name>
        <dbReference type="ChEBI" id="CHEBI:57743"/>
    </ligand>
</feature>
<feature type="binding site" evidence="1">
    <location>
        <position position="188"/>
    </location>
    <ligand>
        <name>L-citrulline</name>
        <dbReference type="ChEBI" id="CHEBI:57743"/>
    </ligand>
</feature>
<feature type="binding site" evidence="1">
    <location>
        <position position="264"/>
    </location>
    <ligand>
        <name>L-citrulline</name>
        <dbReference type="ChEBI" id="CHEBI:57743"/>
    </ligand>
</feature>
<feature type="binding site" evidence="1">
    <location>
        <position position="276"/>
    </location>
    <ligand>
        <name>L-citrulline</name>
        <dbReference type="ChEBI" id="CHEBI:57743"/>
    </ligand>
</feature>
<name>ASSY_OLEA2</name>
<protein>
    <recommendedName>
        <fullName evidence="1">Argininosuccinate synthase</fullName>
        <ecNumber evidence="1">6.3.4.5</ecNumber>
    </recommendedName>
    <alternativeName>
        <fullName evidence="1">Citrulline--aspartate ligase</fullName>
    </alternativeName>
</protein>
<reference key="1">
    <citation type="journal article" date="2011" name="J. Bacteriol.">
        <title>Complete genome sequence and updated annotation of Desulfovibrio alaskensis G20.</title>
        <authorList>
            <person name="Hauser L.J."/>
            <person name="Land M.L."/>
            <person name="Brown S.D."/>
            <person name="Larimer F."/>
            <person name="Keller K.L."/>
            <person name="Rapp-Giles B.J."/>
            <person name="Price M.N."/>
            <person name="Lin M."/>
            <person name="Bruce D.C."/>
            <person name="Detter J.C."/>
            <person name="Tapia R."/>
            <person name="Han C.S."/>
            <person name="Goodwin L.A."/>
            <person name="Cheng J.F."/>
            <person name="Pitluck S."/>
            <person name="Copeland A."/>
            <person name="Lucas S."/>
            <person name="Nolan M."/>
            <person name="Lapidus A.L."/>
            <person name="Palumbo A.V."/>
            <person name="Wall J.D."/>
        </authorList>
    </citation>
    <scope>NUCLEOTIDE SEQUENCE [LARGE SCALE GENOMIC DNA]</scope>
    <source>
        <strain>ATCC BAA-1058 / DSM 17464 / G20</strain>
    </source>
</reference>
<gene>
    <name evidence="1" type="primary">argG</name>
    <name type="ordered locus">Dde_2531</name>
</gene>
<keyword id="KW-0028">Amino-acid biosynthesis</keyword>
<keyword id="KW-0055">Arginine biosynthesis</keyword>
<keyword id="KW-0067">ATP-binding</keyword>
<keyword id="KW-0963">Cytoplasm</keyword>
<keyword id="KW-0436">Ligase</keyword>
<keyword id="KW-0547">Nucleotide-binding</keyword>
<keyword id="KW-1185">Reference proteome</keyword>
<proteinExistence type="inferred from homology"/>